<dbReference type="EMBL" id="BC078527">
    <property type="protein sequence ID" value="AAH78527.1"/>
    <property type="molecule type" value="mRNA"/>
</dbReference>
<dbReference type="RefSeq" id="NP_001087300.1">
    <property type="nucleotide sequence ID" value="NM_001093831.2"/>
</dbReference>
<dbReference type="SMR" id="Q66KX2"/>
<dbReference type="GlyCosmos" id="Q66KX2">
    <property type="glycosylation" value="4 sites, No reported glycans"/>
</dbReference>
<dbReference type="DNASU" id="447122"/>
<dbReference type="GeneID" id="447122"/>
<dbReference type="KEGG" id="xla:447122"/>
<dbReference type="AGR" id="Xenbase:XB-GENE-992662"/>
<dbReference type="CTD" id="447122"/>
<dbReference type="Xenbase" id="XB-GENE-992662">
    <property type="gene designation" value="cadm4.L"/>
</dbReference>
<dbReference type="OrthoDB" id="10028801at2759"/>
<dbReference type="Proteomes" id="UP000186698">
    <property type="component" value="Chromosome 7L"/>
</dbReference>
<dbReference type="Bgee" id="447122">
    <property type="expression patterns" value="Expressed in brain and 18 other cell types or tissues"/>
</dbReference>
<dbReference type="GO" id="GO:0044291">
    <property type="term" value="C:cell-cell contact zone"/>
    <property type="evidence" value="ECO:0000318"/>
    <property type="project" value="GO_Central"/>
</dbReference>
<dbReference type="GO" id="GO:0016020">
    <property type="term" value="C:membrane"/>
    <property type="evidence" value="ECO:0007669"/>
    <property type="project" value="UniProtKB-SubCell"/>
</dbReference>
<dbReference type="GO" id="GO:0043184">
    <property type="term" value="F:vascular endothelial growth factor receptor 2 binding"/>
    <property type="evidence" value="ECO:0000318"/>
    <property type="project" value="GO_Central"/>
</dbReference>
<dbReference type="GO" id="GO:0007156">
    <property type="term" value="P:homophilic cell adhesion via plasma membrane adhesion molecules"/>
    <property type="evidence" value="ECO:0000318"/>
    <property type="project" value="GO_Central"/>
</dbReference>
<dbReference type="GO" id="GO:0035020">
    <property type="term" value="P:regulation of Rac protein signal transduction"/>
    <property type="evidence" value="ECO:0000318"/>
    <property type="project" value="GO_Central"/>
</dbReference>
<dbReference type="GO" id="GO:0061041">
    <property type="term" value="P:regulation of wound healing"/>
    <property type="evidence" value="ECO:0000318"/>
    <property type="project" value="GO_Central"/>
</dbReference>
<dbReference type="CDD" id="cd05885">
    <property type="entry name" value="IgI_2_Necl-4"/>
    <property type="match status" value="1"/>
</dbReference>
<dbReference type="FunFam" id="2.60.40.10:FF:000013">
    <property type="entry name" value="cell adhesion molecule 1 isoform X1"/>
    <property type="match status" value="1"/>
</dbReference>
<dbReference type="FunFam" id="2.60.40.10:FF:000588">
    <property type="entry name" value="Cell adhesion molecule 4"/>
    <property type="match status" value="1"/>
</dbReference>
<dbReference type="Gene3D" id="2.60.40.10">
    <property type="entry name" value="Immunoglobulins"/>
    <property type="match status" value="3"/>
</dbReference>
<dbReference type="InterPro" id="IPR013162">
    <property type="entry name" value="CD80_C2-set"/>
</dbReference>
<dbReference type="InterPro" id="IPR007110">
    <property type="entry name" value="Ig-like_dom"/>
</dbReference>
<dbReference type="InterPro" id="IPR036179">
    <property type="entry name" value="Ig-like_dom_sf"/>
</dbReference>
<dbReference type="InterPro" id="IPR013783">
    <property type="entry name" value="Ig-like_fold"/>
</dbReference>
<dbReference type="InterPro" id="IPR003599">
    <property type="entry name" value="Ig_sub"/>
</dbReference>
<dbReference type="InterPro" id="IPR003598">
    <property type="entry name" value="Ig_sub2"/>
</dbReference>
<dbReference type="InterPro" id="IPR013106">
    <property type="entry name" value="Ig_V-set"/>
</dbReference>
<dbReference type="InterPro" id="IPR003585">
    <property type="entry name" value="Neurexin-like"/>
</dbReference>
<dbReference type="PANTHER" id="PTHR45889:SF3">
    <property type="entry name" value="CELL ADHESION MOLECULE 4"/>
    <property type="match status" value="1"/>
</dbReference>
<dbReference type="PANTHER" id="PTHR45889">
    <property type="entry name" value="IG-LIKE DOMAIN-CONTAINING PROTEIN"/>
    <property type="match status" value="1"/>
</dbReference>
<dbReference type="Pfam" id="PF08205">
    <property type="entry name" value="C2-set_2"/>
    <property type="match status" value="1"/>
</dbReference>
<dbReference type="Pfam" id="PF13927">
    <property type="entry name" value="Ig_3"/>
    <property type="match status" value="1"/>
</dbReference>
<dbReference type="Pfam" id="PF07686">
    <property type="entry name" value="V-set"/>
    <property type="match status" value="1"/>
</dbReference>
<dbReference type="SMART" id="SM00294">
    <property type="entry name" value="4.1m"/>
    <property type="match status" value="1"/>
</dbReference>
<dbReference type="SMART" id="SM00409">
    <property type="entry name" value="IG"/>
    <property type="match status" value="3"/>
</dbReference>
<dbReference type="SMART" id="SM00408">
    <property type="entry name" value="IGc2"/>
    <property type="match status" value="2"/>
</dbReference>
<dbReference type="SUPFAM" id="SSF48726">
    <property type="entry name" value="Immunoglobulin"/>
    <property type="match status" value="3"/>
</dbReference>
<dbReference type="PROSITE" id="PS50835">
    <property type="entry name" value="IG_LIKE"/>
    <property type="match status" value="2"/>
</dbReference>
<name>CADM4_XENLA</name>
<proteinExistence type="evidence at transcript level"/>
<reference key="1">
    <citation type="submission" date="2004-07" db="EMBL/GenBank/DDBJ databases">
        <authorList>
            <consortium name="NIH - Xenopus Gene Collection (XGC) project"/>
        </authorList>
    </citation>
    <scope>NUCLEOTIDE SEQUENCE [LARGE SCALE MRNA]</scope>
    <source>
        <tissue>Tadpole</tissue>
    </source>
</reference>
<organism>
    <name type="scientific">Xenopus laevis</name>
    <name type="common">African clawed frog</name>
    <dbReference type="NCBI Taxonomy" id="8355"/>
    <lineage>
        <taxon>Eukaryota</taxon>
        <taxon>Metazoa</taxon>
        <taxon>Chordata</taxon>
        <taxon>Craniata</taxon>
        <taxon>Vertebrata</taxon>
        <taxon>Euteleostomi</taxon>
        <taxon>Amphibia</taxon>
        <taxon>Batrachia</taxon>
        <taxon>Anura</taxon>
        <taxon>Pipoidea</taxon>
        <taxon>Pipidae</taxon>
        <taxon>Xenopodinae</taxon>
        <taxon>Xenopus</taxon>
        <taxon>Xenopus</taxon>
    </lineage>
</organism>
<evidence type="ECO:0000250" key="1"/>
<evidence type="ECO:0000255" key="2"/>
<evidence type="ECO:0000255" key="3">
    <source>
        <dbReference type="PROSITE-ProRule" id="PRU00114"/>
    </source>
</evidence>
<evidence type="ECO:0000305" key="4"/>
<feature type="signal peptide" evidence="2">
    <location>
        <begin position="1"/>
        <end position="27"/>
    </location>
</feature>
<feature type="chain" id="PRO_0000291983" description="Cell adhesion molecule 4">
    <location>
        <begin position="28"/>
        <end position="390"/>
    </location>
</feature>
<feature type="topological domain" description="Extracellular" evidence="2">
    <location>
        <begin position="28"/>
        <end position="326"/>
    </location>
</feature>
<feature type="transmembrane region" description="Helical" evidence="2">
    <location>
        <begin position="327"/>
        <end position="347"/>
    </location>
</feature>
<feature type="topological domain" description="Cytoplasmic" evidence="2">
    <location>
        <begin position="348"/>
        <end position="390"/>
    </location>
</feature>
<feature type="domain" description="Ig-like V-type">
    <location>
        <begin position="28"/>
        <end position="122"/>
    </location>
</feature>
<feature type="domain" description="Ig-like C2-type 1">
    <location>
        <begin position="127"/>
        <end position="219"/>
    </location>
</feature>
<feature type="domain" description="Ig-like C2-type 2">
    <location>
        <begin position="226"/>
        <end position="309"/>
    </location>
</feature>
<feature type="glycosylation site" description="N-linked (GlcNAc...) asparagine" evidence="2">
    <location>
        <position position="34"/>
    </location>
</feature>
<feature type="glycosylation site" description="N-linked (GlcNAc...) asparagine" evidence="2">
    <location>
        <position position="70"/>
    </location>
</feature>
<feature type="glycosylation site" description="N-linked (GlcNAc...) asparagine" evidence="2">
    <location>
        <position position="264"/>
    </location>
</feature>
<feature type="glycosylation site" description="N-linked (GlcNAc...) asparagine" evidence="2">
    <location>
        <position position="288"/>
    </location>
</feature>
<feature type="disulfide bond" evidence="3">
    <location>
        <begin position="47"/>
        <end position="107"/>
    </location>
</feature>
<feature type="disulfide bond" evidence="3">
    <location>
        <begin position="148"/>
        <end position="202"/>
    </location>
</feature>
<feature type="disulfide bond" evidence="3">
    <location>
        <begin position="247"/>
        <end position="293"/>
    </location>
</feature>
<gene>
    <name type="primary">cadm4</name>
    <name type="synonym">igsf4c</name>
</gene>
<sequence>MAPALTALNRCFVLGILLLVTAGTAFSQEVQAENVTVVEGSTVEISCHLHQYDGSIVVIQNPVRQTLFFNGTRALKDTRFQLVEFTQKVVKIHLSDAKLEDEGGYFCQLYTEDTHHQIATLTVIVPPDNPLVEVKEQAVEGGEIELTCISPRTKPAATLRWYRDRKELKGFTSKQENGKTFSITNSIRFNVDRKDDGNIVTCEASHPALKGQKKQTQYELDVQFSPTASIQPSQSLVRDGDELNLKCEVTGNPRPTEIIWTRLNDSLPDRAQIQGDLLSFPSLNLQDNGTYSCQVSNKHGRSSDQYVLVVYDPGAIIEAQTQVPYAVIGGILALLVFLVICILIVMVWCSVRQKGSYLTHEASGLDEHGEAREAFLNGGENHKRKEEFFI</sequence>
<comment type="function">
    <text evidence="1">Involved in the cell-cell adhesion.</text>
</comment>
<comment type="subcellular location">
    <subcellularLocation>
        <location evidence="4">Membrane</location>
        <topology evidence="4">Single-pass type I membrane protein</topology>
    </subcellularLocation>
</comment>
<comment type="similarity">
    <text evidence="4">Belongs to the nectin family.</text>
</comment>
<accession>Q66KX2</accession>
<protein>
    <recommendedName>
        <fullName>Cell adhesion molecule 4</fullName>
    </recommendedName>
    <alternativeName>
        <fullName>Immunoglobulin superfamily member 4C</fullName>
        <shortName>IgSF4C</shortName>
    </alternativeName>
</protein>
<keyword id="KW-0130">Cell adhesion</keyword>
<keyword id="KW-1015">Disulfide bond</keyword>
<keyword id="KW-0325">Glycoprotein</keyword>
<keyword id="KW-0393">Immunoglobulin domain</keyword>
<keyword id="KW-0472">Membrane</keyword>
<keyword id="KW-1185">Reference proteome</keyword>
<keyword id="KW-0677">Repeat</keyword>
<keyword id="KW-0732">Signal</keyword>
<keyword id="KW-0812">Transmembrane</keyword>
<keyword id="KW-1133">Transmembrane helix</keyword>